<name>RL28_NATTJ</name>
<sequence>MANLCEICGKGNNSGASVSHSNKKTKRKWKGNIQKLKAMVDGRPKKVKVCTQCIKAGKIERAF</sequence>
<gene>
    <name evidence="1" type="primary">rpmB</name>
    <name type="ordered locus">Nther_1343</name>
</gene>
<accession>B2A2L1</accession>
<reference key="1">
    <citation type="submission" date="2008-04" db="EMBL/GenBank/DDBJ databases">
        <title>Complete sequence of chromosome of Natranaerobius thermophilus JW/NM-WN-LF.</title>
        <authorList>
            <consortium name="US DOE Joint Genome Institute"/>
            <person name="Copeland A."/>
            <person name="Lucas S."/>
            <person name="Lapidus A."/>
            <person name="Glavina del Rio T."/>
            <person name="Dalin E."/>
            <person name="Tice H."/>
            <person name="Bruce D."/>
            <person name="Goodwin L."/>
            <person name="Pitluck S."/>
            <person name="Chertkov O."/>
            <person name="Brettin T."/>
            <person name="Detter J.C."/>
            <person name="Han C."/>
            <person name="Kuske C.R."/>
            <person name="Schmutz J."/>
            <person name="Larimer F."/>
            <person name="Land M."/>
            <person name="Hauser L."/>
            <person name="Kyrpides N."/>
            <person name="Lykidis A."/>
            <person name="Mesbah N.M."/>
            <person name="Wiegel J."/>
        </authorList>
    </citation>
    <scope>NUCLEOTIDE SEQUENCE [LARGE SCALE GENOMIC DNA]</scope>
    <source>
        <strain>ATCC BAA-1301 / DSM 18059 / JW/NM-WN-LF</strain>
    </source>
</reference>
<evidence type="ECO:0000255" key="1">
    <source>
        <dbReference type="HAMAP-Rule" id="MF_00373"/>
    </source>
</evidence>
<evidence type="ECO:0000256" key="2">
    <source>
        <dbReference type="SAM" id="MobiDB-lite"/>
    </source>
</evidence>
<evidence type="ECO:0000305" key="3"/>
<comment type="similarity">
    <text evidence="1">Belongs to the bacterial ribosomal protein bL28 family.</text>
</comment>
<feature type="chain" id="PRO_1000121662" description="Large ribosomal subunit protein bL28">
    <location>
        <begin position="1"/>
        <end position="63"/>
    </location>
</feature>
<feature type="region of interest" description="Disordered" evidence="2">
    <location>
        <begin position="11"/>
        <end position="30"/>
    </location>
</feature>
<feature type="compositionally biased region" description="Polar residues" evidence="2">
    <location>
        <begin position="11"/>
        <end position="20"/>
    </location>
</feature>
<feature type="compositionally biased region" description="Basic residues" evidence="2">
    <location>
        <begin position="21"/>
        <end position="30"/>
    </location>
</feature>
<organism>
    <name type="scientific">Natranaerobius thermophilus (strain ATCC BAA-1301 / DSM 18059 / JW/NM-WN-LF)</name>
    <dbReference type="NCBI Taxonomy" id="457570"/>
    <lineage>
        <taxon>Bacteria</taxon>
        <taxon>Bacillati</taxon>
        <taxon>Bacillota</taxon>
        <taxon>Clostridia</taxon>
        <taxon>Natranaerobiales</taxon>
        <taxon>Natranaerobiaceae</taxon>
        <taxon>Natranaerobius</taxon>
    </lineage>
</organism>
<proteinExistence type="inferred from homology"/>
<dbReference type="EMBL" id="CP001034">
    <property type="protein sequence ID" value="ACB84926.1"/>
    <property type="molecule type" value="Genomic_DNA"/>
</dbReference>
<dbReference type="RefSeq" id="WP_012447801.1">
    <property type="nucleotide sequence ID" value="NC_010718.1"/>
</dbReference>
<dbReference type="SMR" id="B2A2L1"/>
<dbReference type="FunCoup" id="B2A2L1">
    <property type="interactions" value="193"/>
</dbReference>
<dbReference type="STRING" id="457570.Nther_1343"/>
<dbReference type="KEGG" id="nth:Nther_1343"/>
<dbReference type="eggNOG" id="COG0227">
    <property type="taxonomic scope" value="Bacteria"/>
</dbReference>
<dbReference type="HOGENOM" id="CLU_064548_7_0_9"/>
<dbReference type="InParanoid" id="B2A2L1"/>
<dbReference type="OrthoDB" id="9805609at2"/>
<dbReference type="Proteomes" id="UP000001683">
    <property type="component" value="Chromosome"/>
</dbReference>
<dbReference type="GO" id="GO:1990904">
    <property type="term" value="C:ribonucleoprotein complex"/>
    <property type="evidence" value="ECO:0007669"/>
    <property type="project" value="UniProtKB-KW"/>
</dbReference>
<dbReference type="GO" id="GO:0005840">
    <property type="term" value="C:ribosome"/>
    <property type="evidence" value="ECO:0007669"/>
    <property type="project" value="UniProtKB-KW"/>
</dbReference>
<dbReference type="GO" id="GO:0003735">
    <property type="term" value="F:structural constituent of ribosome"/>
    <property type="evidence" value="ECO:0007669"/>
    <property type="project" value="InterPro"/>
</dbReference>
<dbReference type="GO" id="GO:0006412">
    <property type="term" value="P:translation"/>
    <property type="evidence" value="ECO:0007669"/>
    <property type="project" value="UniProtKB-UniRule"/>
</dbReference>
<dbReference type="Gene3D" id="2.30.170.40">
    <property type="entry name" value="Ribosomal protein L28/L24"/>
    <property type="match status" value="1"/>
</dbReference>
<dbReference type="HAMAP" id="MF_00373">
    <property type="entry name" value="Ribosomal_bL28"/>
    <property type="match status" value="1"/>
</dbReference>
<dbReference type="InterPro" id="IPR050096">
    <property type="entry name" value="Bacterial_rp_bL28"/>
</dbReference>
<dbReference type="InterPro" id="IPR026569">
    <property type="entry name" value="Ribosomal_bL28"/>
</dbReference>
<dbReference type="InterPro" id="IPR034704">
    <property type="entry name" value="Ribosomal_bL28/bL31-like_sf"/>
</dbReference>
<dbReference type="InterPro" id="IPR001383">
    <property type="entry name" value="Ribosomal_bL28_bact-type"/>
</dbReference>
<dbReference type="InterPro" id="IPR037147">
    <property type="entry name" value="Ribosomal_bL28_sf"/>
</dbReference>
<dbReference type="NCBIfam" id="TIGR00009">
    <property type="entry name" value="L28"/>
    <property type="match status" value="1"/>
</dbReference>
<dbReference type="PANTHER" id="PTHR39080">
    <property type="entry name" value="50S RIBOSOMAL PROTEIN L28"/>
    <property type="match status" value="1"/>
</dbReference>
<dbReference type="PANTHER" id="PTHR39080:SF1">
    <property type="entry name" value="LARGE RIBOSOMAL SUBUNIT PROTEIN BL28A"/>
    <property type="match status" value="1"/>
</dbReference>
<dbReference type="Pfam" id="PF00830">
    <property type="entry name" value="Ribosomal_L28"/>
    <property type="match status" value="1"/>
</dbReference>
<dbReference type="SUPFAM" id="SSF143800">
    <property type="entry name" value="L28p-like"/>
    <property type="match status" value="1"/>
</dbReference>
<protein>
    <recommendedName>
        <fullName evidence="1">Large ribosomal subunit protein bL28</fullName>
    </recommendedName>
    <alternativeName>
        <fullName evidence="3">50S ribosomal protein L28</fullName>
    </alternativeName>
</protein>
<keyword id="KW-1185">Reference proteome</keyword>
<keyword id="KW-0687">Ribonucleoprotein</keyword>
<keyword id="KW-0689">Ribosomal protein</keyword>